<accession>P9WG53</accession>
<accession>L0TD31</accession>
<accession>O06382</accession>
<accession>P67151</accession>
<sequence>MDRQSAVAQLRAAAEQFARVHLDACDRWSVGLSGGPDSLALTAVAARLWPTTALIVDHGLQPGSATVAETARIQAISLGCVDARVLCVQVGAAGGREAAARSARYSALEEHRDGPVLLAHTLDDQAETVLLGLGRGSGARSIAGMRPYDPPWCRPLLGVRRSVTHAACRELGLTAWQDPHNTDRRFTRTRLRTEVLPLLEDVLGGGVAEALARTATALREDTDLIDTIAAQALPGAAVAGSRGQELSTSALTALPDAVRRRVIRGWLLAGGATGLTDRQIRGVDRLVTAWRGQGGVAVGSTLRGQRLVAGRRDGVLVLRREPV</sequence>
<organism>
    <name type="scientific">Mycobacterium tuberculosis (strain ATCC 25618 / H37Rv)</name>
    <dbReference type="NCBI Taxonomy" id="83332"/>
    <lineage>
        <taxon>Bacteria</taxon>
        <taxon>Bacillati</taxon>
        <taxon>Actinomycetota</taxon>
        <taxon>Actinomycetes</taxon>
        <taxon>Mycobacteriales</taxon>
        <taxon>Mycobacteriaceae</taxon>
        <taxon>Mycobacterium</taxon>
        <taxon>Mycobacterium tuberculosis complex</taxon>
    </lineage>
</organism>
<comment type="function">
    <text evidence="1">Ligates lysine onto the cytidine present at position 34 of the AUA codon-specific tRNA(Ile) that contains the anticodon CAU, in an ATP-dependent manner. Cytidine is converted to lysidine, thus changing the amino acid specificity of the tRNA from methionine to isoleucine.</text>
</comment>
<comment type="catalytic activity">
    <reaction evidence="1">
        <text>cytidine(34) in tRNA(Ile2) + L-lysine + ATP = lysidine(34) in tRNA(Ile2) + AMP + diphosphate + H(+)</text>
        <dbReference type="Rhea" id="RHEA:43744"/>
        <dbReference type="Rhea" id="RHEA-COMP:10625"/>
        <dbReference type="Rhea" id="RHEA-COMP:10670"/>
        <dbReference type="ChEBI" id="CHEBI:15378"/>
        <dbReference type="ChEBI" id="CHEBI:30616"/>
        <dbReference type="ChEBI" id="CHEBI:32551"/>
        <dbReference type="ChEBI" id="CHEBI:33019"/>
        <dbReference type="ChEBI" id="CHEBI:82748"/>
        <dbReference type="ChEBI" id="CHEBI:83665"/>
        <dbReference type="ChEBI" id="CHEBI:456215"/>
        <dbReference type="EC" id="6.3.4.19"/>
    </reaction>
</comment>
<comment type="subcellular location">
    <subcellularLocation>
        <location evidence="1">Cytoplasm</location>
    </subcellularLocation>
</comment>
<comment type="domain">
    <text evidence="1">The N-terminal region contains the highly conserved SGGXDS motif, predicted to be a P-loop motif involved in ATP binding.</text>
</comment>
<comment type="similarity">
    <text evidence="1">Belongs to the tRNA(Ile)-lysidine synthase family.</text>
</comment>
<evidence type="ECO:0000255" key="1">
    <source>
        <dbReference type="HAMAP-Rule" id="MF_01161"/>
    </source>
</evidence>
<gene>
    <name evidence="1" type="primary">tilS</name>
    <name type="ordered locus">Rv3625c</name>
    <name type="ORF">MTCY15C10.27</name>
</gene>
<protein>
    <recommendedName>
        <fullName evidence="1">tRNA(Ile)-lysidine synthase</fullName>
        <ecNumber evidence="1">6.3.4.19</ecNumber>
    </recommendedName>
    <alternativeName>
        <fullName evidence="1">tRNA(Ile)-2-lysyl-cytidine synthase</fullName>
    </alternativeName>
    <alternativeName>
        <fullName evidence="1">tRNA(Ile)-lysidine synthetase</fullName>
    </alternativeName>
</protein>
<keyword id="KW-0067">ATP-binding</keyword>
<keyword id="KW-0963">Cytoplasm</keyword>
<keyword id="KW-0436">Ligase</keyword>
<keyword id="KW-0547">Nucleotide-binding</keyword>
<keyword id="KW-1185">Reference proteome</keyword>
<keyword id="KW-0819">tRNA processing</keyword>
<name>TILS_MYCTU</name>
<dbReference type="EC" id="6.3.4.19" evidence="1"/>
<dbReference type="EMBL" id="AL123456">
    <property type="protein sequence ID" value="CCP46448.1"/>
    <property type="molecule type" value="Genomic_DNA"/>
</dbReference>
<dbReference type="PIR" id="B70561">
    <property type="entry name" value="B70561"/>
</dbReference>
<dbReference type="RefSeq" id="WP_003899608.1">
    <property type="nucleotide sequence ID" value="NZ_NVQJ01000045.1"/>
</dbReference>
<dbReference type="SMR" id="P9WG53"/>
<dbReference type="FunCoup" id="P9WG53">
    <property type="interactions" value="18"/>
</dbReference>
<dbReference type="STRING" id="83332.Rv3625c"/>
<dbReference type="PaxDb" id="83332-Rv3625c"/>
<dbReference type="DNASU" id="885409"/>
<dbReference type="KEGG" id="mtu:Rv3625c"/>
<dbReference type="KEGG" id="mtv:RVBD_3625c"/>
<dbReference type="TubercuList" id="Rv3625c"/>
<dbReference type="eggNOG" id="COG0037">
    <property type="taxonomic scope" value="Bacteria"/>
</dbReference>
<dbReference type="InParanoid" id="P9WG53"/>
<dbReference type="OrthoDB" id="5244702at2"/>
<dbReference type="PhylomeDB" id="P9WG53"/>
<dbReference type="Proteomes" id="UP000001584">
    <property type="component" value="Chromosome"/>
</dbReference>
<dbReference type="GO" id="GO:0005737">
    <property type="term" value="C:cytoplasm"/>
    <property type="evidence" value="ECO:0007669"/>
    <property type="project" value="UniProtKB-SubCell"/>
</dbReference>
<dbReference type="GO" id="GO:0005524">
    <property type="term" value="F:ATP binding"/>
    <property type="evidence" value="ECO:0007669"/>
    <property type="project" value="UniProtKB-UniRule"/>
</dbReference>
<dbReference type="GO" id="GO:0032267">
    <property type="term" value="F:tRNA(Ile)-lysidine synthase activity"/>
    <property type="evidence" value="ECO:0007669"/>
    <property type="project" value="UniProtKB-EC"/>
</dbReference>
<dbReference type="GO" id="GO:0006400">
    <property type="term" value="P:tRNA modification"/>
    <property type="evidence" value="ECO:0007669"/>
    <property type="project" value="UniProtKB-UniRule"/>
</dbReference>
<dbReference type="CDD" id="cd01992">
    <property type="entry name" value="TilS_N"/>
    <property type="match status" value="1"/>
</dbReference>
<dbReference type="Gene3D" id="1.20.59.20">
    <property type="match status" value="1"/>
</dbReference>
<dbReference type="Gene3D" id="3.40.50.620">
    <property type="entry name" value="HUPs"/>
    <property type="match status" value="1"/>
</dbReference>
<dbReference type="HAMAP" id="MF_01161">
    <property type="entry name" value="tRNA_Ile_lys_synt"/>
    <property type="match status" value="1"/>
</dbReference>
<dbReference type="InterPro" id="IPR014729">
    <property type="entry name" value="Rossmann-like_a/b/a_fold"/>
</dbReference>
<dbReference type="InterPro" id="IPR011063">
    <property type="entry name" value="TilS/TtcA_N"/>
</dbReference>
<dbReference type="InterPro" id="IPR012094">
    <property type="entry name" value="tRNA_Ile_lys_synt"/>
</dbReference>
<dbReference type="InterPro" id="IPR012795">
    <property type="entry name" value="tRNA_Ile_lys_synt_N"/>
</dbReference>
<dbReference type="InterPro" id="IPR015262">
    <property type="entry name" value="tRNA_Ile_lys_synt_subst-bd"/>
</dbReference>
<dbReference type="NCBIfam" id="TIGR02432">
    <property type="entry name" value="lysidine_TilS_N"/>
    <property type="match status" value="1"/>
</dbReference>
<dbReference type="PANTHER" id="PTHR43033">
    <property type="entry name" value="TRNA(ILE)-LYSIDINE SYNTHASE-RELATED"/>
    <property type="match status" value="1"/>
</dbReference>
<dbReference type="PANTHER" id="PTHR43033:SF1">
    <property type="entry name" value="TRNA(ILE)-LYSIDINE SYNTHASE-RELATED"/>
    <property type="match status" value="1"/>
</dbReference>
<dbReference type="Pfam" id="PF01171">
    <property type="entry name" value="ATP_bind_3"/>
    <property type="match status" value="1"/>
</dbReference>
<dbReference type="Pfam" id="PF09179">
    <property type="entry name" value="TilS"/>
    <property type="match status" value="1"/>
</dbReference>
<dbReference type="SUPFAM" id="SSF52402">
    <property type="entry name" value="Adenine nucleotide alpha hydrolases-like"/>
    <property type="match status" value="1"/>
</dbReference>
<dbReference type="SUPFAM" id="SSF82829">
    <property type="entry name" value="MesJ substrate recognition domain-like"/>
    <property type="match status" value="1"/>
</dbReference>
<proteinExistence type="evidence at protein level"/>
<feature type="chain" id="PRO_0000181725" description="tRNA(Ile)-lysidine synthase">
    <location>
        <begin position="1"/>
        <end position="323"/>
    </location>
</feature>
<feature type="binding site" evidence="1">
    <location>
        <begin position="33"/>
        <end position="38"/>
    </location>
    <ligand>
        <name>ATP</name>
        <dbReference type="ChEBI" id="CHEBI:30616"/>
    </ligand>
</feature>
<reference key="1">
    <citation type="journal article" date="1998" name="Nature">
        <title>Deciphering the biology of Mycobacterium tuberculosis from the complete genome sequence.</title>
        <authorList>
            <person name="Cole S.T."/>
            <person name="Brosch R."/>
            <person name="Parkhill J."/>
            <person name="Garnier T."/>
            <person name="Churcher C.M."/>
            <person name="Harris D.E."/>
            <person name="Gordon S.V."/>
            <person name="Eiglmeier K."/>
            <person name="Gas S."/>
            <person name="Barry C.E. III"/>
            <person name="Tekaia F."/>
            <person name="Badcock K."/>
            <person name="Basham D."/>
            <person name="Brown D."/>
            <person name="Chillingworth T."/>
            <person name="Connor R."/>
            <person name="Davies R.M."/>
            <person name="Devlin K."/>
            <person name="Feltwell T."/>
            <person name="Gentles S."/>
            <person name="Hamlin N."/>
            <person name="Holroyd S."/>
            <person name="Hornsby T."/>
            <person name="Jagels K."/>
            <person name="Krogh A."/>
            <person name="McLean J."/>
            <person name="Moule S."/>
            <person name="Murphy L.D."/>
            <person name="Oliver S."/>
            <person name="Osborne J."/>
            <person name="Quail M.A."/>
            <person name="Rajandream M.A."/>
            <person name="Rogers J."/>
            <person name="Rutter S."/>
            <person name="Seeger K."/>
            <person name="Skelton S."/>
            <person name="Squares S."/>
            <person name="Squares R."/>
            <person name="Sulston J.E."/>
            <person name="Taylor K."/>
            <person name="Whitehead S."/>
            <person name="Barrell B.G."/>
        </authorList>
    </citation>
    <scope>NUCLEOTIDE SEQUENCE [LARGE SCALE GENOMIC DNA]</scope>
    <source>
        <strain>ATCC 25618 / H37Rv</strain>
    </source>
</reference>
<reference key="2">
    <citation type="journal article" date="2011" name="Mol. Cell. Proteomics">
        <title>Proteogenomic analysis of Mycobacterium tuberculosis by high resolution mass spectrometry.</title>
        <authorList>
            <person name="Kelkar D.S."/>
            <person name="Kumar D."/>
            <person name="Kumar P."/>
            <person name="Balakrishnan L."/>
            <person name="Muthusamy B."/>
            <person name="Yadav A.K."/>
            <person name="Shrivastava P."/>
            <person name="Marimuthu A."/>
            <person name="Anand S."/>
            <person name="Sundaram H."/>
            <person name="Kingsbury R."/>
            <person name="Harsha H.C."/>
            <person name="Nair B."/>
            <person name="Prasad T.S."/>
            <person name="Chauhan D.S."/>
            <person name="Katoch K."/>
            <person name="Katoch V.M."/>
            <person name="Kumar P."/>
            <person name="Chaerkady R."/>
            <person name="Ramachandran S."/>
            <person name="Dash D."/>
            <person name="Pandey A."/>
        </authorList>
    </citation>
    <scope>IDENTIFICATION BY MASS SPECTROMETRY [LARGE SCALE ANALYSIS]</scope>
    <source>
        <strain>ATCC 25618 / H37Rv</strain>
    </source>
</reference>